<gene>
    <name type="primary">oct1</name>
    <name type="ORF">SS1G_01296</name>
</gene>
<accession>A7E7L8</accession>
<organism>
    <name type="scientific">Sclerotinia sclerotiorum (strain ATCC 18683 / 1980 / Ss-1)</name>
    <name type="common">White mold</name>
    <name type="synonym">Whetzelinia sclerotiorum</name>
    <dbReference type="NCBI Taxonomy" id="665079"/>
    <lineage>
        <taxon>Eukaryota</taxon>
        <taxon>Fungi</taxon>
        <taxon>Dikarya</taxon>
        <taxon>Ascomycota</taxon>
        <taxon>Pezizomycotina</taxon>
        <taxon>Leotiomycetes</taxon>
        <taxon>Helotiales</taxon>
        <taxon>Sclerotiniaceae</taxon>
        <taxon>Sclerotinia</taxon>
    </lineage>
</organism>
<protein>
    <recommendedName>
        <fullName>Mitochondrial intermediate peptidase</fullName>
        <shortName>MIP</shortName>
        <ecNumber>3.4.24.59</ecNumber>
    </recommendedName>
    <alternativeName>
        <fullName>Octapeptidyl aminopeptidase</fullName>
    </alternativeName>
</protein>
<name>PMIP_SCLS1</name>
<evidence type="ECO:0000250" key="1"/>
<evidence type="ECO:0000255" key="2"/>
<evidence type="ECO:0000255" key="3">
    <source>
        <dbReference type="PROSITE-ProRule" id="PRU10095"/>
    </source>
</evidence>
<evidence type="ECO:0000256" key="4">
    <source>
        <dbReference type="SAM" id="MobiDB-lite"/>
    </source>
</evidence>
<evidence type="ECO:0000305" key="5"/>
<keyword id="KW-0378">Hydrolase</keyword>
<keyword id="KW-0479">Metal-binding</keyword>
<keyword id="KW-0482">Metalloprotease</keyword>
<keyword id="KW-0496">Mitochondrion</keyword>
<keyword id="KW-0645">Protease</keyword>
<keyword id="KW-1185">Reference proteome</keyword>
<keyword id="KW-0809">Transit peptide</keyword>
<keyword id="KW-0862">Zinc</keyword>
<comment type="function">
    <text evidence="1">Cleaves proteins, imported into the mitochondrion, to their mature size. While most mitochondrial precursor proteins are processed to the mature form in one step by mitochondrial processing peptidase (MPP), the sequential cleavage by MIP of an octapeptide after initial processing by MPP is a required step for a subgroup of nuclear-encoded precursor proteins destined for the matrix or the inner membrane (By similarity).</text>
</comment>
<comment type="catalytic activity">
    <reaction>
        <text>Release of an N-terminal octapeptide as second stage of processing of some proteins imported into the mitochondrion.</text>
        <dbReference type="EC" id="3.4.24.59"/>
    </reaction>
</comment>
<comment type="cofactor">
    <cofactor evidence="1">
        <name>Zn(2+)</name>
        <dbReference type="ChEBI" id="CHEBI:29105"/>
    </cofactor>
    <text evidence="1">Binds 1 zinc ion.</text>
</comment>
<comment type="subcellular location">
    <subcellularLocation>
        <location evidence="1">Mitochondrion matrix</location>
    </subcellularLocation>
</comment>
<comment type="similarity">
    <text evidence="5">Belongs to the peptidase M3 family.</text>
</comment>
<comment type="sequence caution" evidence="5">
    <conflict type="erroneous initiation">
        <sequence resource="EMBL-CDS" id="EDN96370"/>
    </conflict>
</comment>
<reference key="1">
    <citation type="journal article" date="2011" name="PLoS Genet.">
        <title>Genomic analysis of the necrotrophic fungal pathogens Sclerotinia sclerotiorum and Botrytis cinerea.</title>
        <authorList>
            <person name="Amselem J."/>
            <person name="Cuomo C.A."/>
            <person name="van Kan J.A.L."/>
            <person name="Viaud M."/>
            <person name="Benito E.P."/>
            <person name="Couloux A."/>
            <person name="Coutinho P.M."/>
            <person name="de Vries R.P."/>
            <person name="Dyer P.S."/>
            <person name="Fillinger S."/>
            <person name="Fournier E."/>
            <person name="Gout L."/>
            <person name="Hahn M."/>
            <person name="Kohn L."/>
            <person name="Lapalu N."/>
            <person name="Plummer K.M."/>
            <person name="Pradier J.-M."/>
            <person name="Quevillon E."/>
            <person name="Sharon A."/>
            <person name="Simon A."/>
            <person name="ten Have A."/>
            <person name="Tudzynski B."/>
            <person name="Tudzynski P."/>
            <person name="Wincker P."/>
            <person name="Andrew M."/>
            <person name="Anthouard V."/>
            <person name="Beever R.E."/>
            <person name="Beffa R."/>
            <person name="Benoit I."/>
            <person name="Bouzid O."/>
            <person name="Brault B."/>
            <person name="Chen Z."/>
            <person name="Choquer M."/>
            <person name="Collemare J."/>
            <person name="Cotton P."/>
            <person name="Danchin E.G."/>
            <person name="Da Silva C."/>
            <person name="Gautier A."/>
            <person name="Giraud C."/>
            <person name="Giraud T."/>
            <person name="Gonzalez C."/>
            <person name="Grossetete S."/>
            <person name="Gueldener U."/>
            <person name="Henrissat B."/>
            <person name="Howlett B.J."/>
            <person name="Kodira C."/>
            <person name="Kretschmer M."/>
            <person name="Lappartient A."/>
            <person name="Leroch M."/>
            <person name="Levis C."/>
            <person name="Mauceli E."/>
            <person name="Neuveglise C."/>
            <person name="Oeser B."/>
            <person name="Pearson M."/>
            <person name="Poulain J."/>
            <person name="Poussereau N."/>
            <person name="Quesneville H."/>
            <person name="Rascle C."/>
            <person name="Schumacher J."/>
            <person name="Segurens B."/>
            <person name="Sexton A."/>
            <person name="Silva E."/>
            <person name="Sirven C."/>
            <person name="Soanes D.M."/>
            <person name="Talbot N.J."/>
            <person name="Templeton M."/>
            <person name="Yandava C."/>
            <person name="Yarden O."/>
            <person name="Zeng Q."/>
            <person name="Rollins J.A."/>
            <person name="Lebrun M.-H."/>
            <person name="Dickman M."/>
        </authorList>
    </citation>
    <scope>NUCLEOTIDE SEQUENCE [LARGE SCALE GENOMIC DNA]</scope>
    <source>
        <strain>ATCC 18683 / 1980 / Ss-1</strain>
    </source>
</reference>
<feature type="transit peptide" description="Mitochondrion" evidence="2">
    <location>
        <begin position="1"/>
        <end position="27"/>
    </location>
</feature>
<feature type="chain" id="PRO_0000338594" description="Mitochondrial intermediate peptidase">
    <location>
        <begin position="28"/>
        <end position="785"/>
    </location>
</feature>
<feature type="region of interest" description="Disordered" evidence="4">
    <location>
        <begin position="26"/>
        <end position="52"/>
    </location>
</feature>
<feature type="active site" evidence="3">
    <location>
        <position position="567"/>
    </location>
</feature>
<feature type="binding site" evidence="3">
    <location>
        <position position="566"/>
    </location>
    <ligand>
        <name>Zn(2+)</name>
        <dbReference type="ChEBI" id="CHEBI:29105"/>
        <note>catalytic</note>
    </ligand>
</feature>
<feature type="binding site" evidence="3">
    <location>
        <position position="570"/>
    </location>
    <ligand>
        <name>Zn(2+)</name>
        <dbReference type="ChEBI" id="CHEBI:29105"/>
        <note>catalytic</note>
    </ligand>
</feature>
<feature type="binding site" evidence="3">
    <location>
        <position position="573"/>
    </location>
    <ligand>
        <name>Zn(2+)</name>
        <dbReference type="ChEBI" id="CHEBI:29105"/>
        <note>catalytic</note>
    </ligand>
</feature>
<sequence>MLKAVMPRPWVCSRCVKRQIQSSRGLATASTQYREPRPVPTDHSAPGAKHDDRTLRQIFDSPDFWADFSQSSKQSYYRPGVGLFQNRYLVNPQGFEVFANTSLRKAQRIVDKVLKASTVEEYRHVARDLDRLSDLLCRVIDLSDFVRATHPNAAIQAAASRAYAKMFEYMNILNTTTGLDKQLEVAMGTPEIVAGWTEEEVVVADILKKDFAKSAIDLPRAQREKFVALSQEISEIGPDFVDYMTPAKSYLTFESSKLKGMDPVLVREHTTWGQTKIPTIGGAAAAAIRTVQNEEVRREIFMATRTASRNTVHKLEELMRKRAELAKLSRYESYSQLALGDKMAKSPASVTQFLEALAKDNNKIVQGEVSELLKFKFSNPNASSPGLQPWDKDYYMSRILASVRSHSRNSDFLSAYFSLGTVMQGLSRLFTRLYGVRLAPHETMPGETWNSDVRRLDVISETDGHVAVLYCDLFSRPGKSPNPAHFTLRCSREITTAELEEASMLSQNGLFKTDEEAANDGMATSKSSGVLKQLPTIALICDFVTMSGKSSRPALLSFNEVQTLFHEMGHAIHSILGRTSLQNVSGTRCATDFAELPSVLMEHFAADPSVLSLFARHYETDQQLPYEMVAEKLALDKRFEGSDTENQIILSMLDLAYHSDLPLSPTFNSTEIYHSLQQKHGALPVDPPGTCWQGFFGHLFGYGSTYYSYLFDRVLARRIWQVVFQGGEAGGSVHRGNGEKMKEEVLKWGGGRDPWKCLAGVLDDGRVENGDEKAMAIVGSWGVKE</sequence>
<dbReference type="EC" id="3.4.24.59"/>
<dbReference type="EMBL" id="CH476622">
    <property type="protein sequence ID" value="EDN96370.1"/>
    <property type="status" value="ALT_INIT"/>
    <property type="molecule type" value="Genomic_DNA"/>
</dbReference>
<dbReference type="RefSeq" id="XP_001597102.1">
    <property type="nucleotide sequence ID" value="XM_001597052.1"/>
</dbReference>
<dbReference type="SMR" id="A7E7L8"/>
<dbReference type="FunCoup" id="A7E7L8">
    <property type="interactions" value="600"/>
</dbReference>
<dbReference type="STRING" id="665079.A7E7L8"/>
<dbReference type="GeneID" id="5493674"/>
<dbReference type="KEGG" id="ssl:SS1G_01296"/>
<dbReference type="VEuPathDB" id="FungiDB:sscle_01g009890"/>
<dbReference type="eggNOG" id="KOG2090">
    <property type="taxonomic scope" value="Eukaryota"/>
</dbReference>
<dbReference type="InParanoid" id="A7E7L8"/>
<dbReference type="OrthoDB" id="17530at2759"/>
<dbReference type="Proteomes" id="UP000001312">
    <property type="component" value="Unassembled WGS sequence"/>
</dbReference>
<dbReference type="GO" id="GO:0005759">
    <property type="term" value="C:mitochondrial matrix"/>
    <property type="evidence" value="ECO:0007669"/>
    <property type="project" value="UniProtKB-SubCell"/>
</dbReference>
<dbReference type="GO" id="GO:0005739">
    <property type="term" value="C:mitochondrion"/>
    <property type="evidence" value="ECO:0000318"/>
    <property type="project" value="GO_Central"/>
</dbReference>
<dbReference type="GO" id="GO:0046872">
    <property type="term" value="F:metal ion binding"/>
    <property type="evidence" value="ECO:0007669"/>
    <property type="project" value="UniProtKB-KW"/>
</dbReference>
<dbReference type="GO" id="GO:0004222">
    <property type="term" value="F:metalloendopeptidase activity"/>
    <property type="evidence" value="ECO:0000318"/>
    <property type="project" value="GO_Central"/>
</dbReference>
<dbReference type="GO" id="GO:0006518">
    <property type="term" value="P:peptide metabolic process"/>
    <property type="evidence" value="ECO:0000318"/>
    <property type="project" value="GO_Central"/>
</dbReference>
<dbReference type="GO" id="GO:0006627">
    <property type="term" value="P:protein processing involved in protein targeting to mitochondrion"/>
    <property type="evidence" value="ECO:0000318"/>
    <property type="project" value="GO_Central"/>
</dbReference>
<dbReference type="CDD" id="cd06457">
    <property type="entry name" value="M3A_MIP"/>
    <property type="match status" value="1"/>
</dbReference>
<dbReference type="Gene3D" id="3.40.390.10">
    <property type="entry name" value="Collagenase (Catalytic Domain)"/>
    <property type="match status" value="1"/>
</dbReference>
<dbReference type="Gene3D" id="1.10.1370.10">
    <property type="entry name" value="Neurolysin, domain 3"/>
    <property type="match status" value="1"/>
</dbReference>
<dbReference type="InterPro" id="IPR033851">
    <property type="entry name" value="M3A_MIP"/>
</dbReference>
<dbReference type="InterPro" id="IPR024079">
    <property type="entry name" value="MetalloPept_cat_dom_sf"/>
</dbReference>
<dbReference type="InterPro" id="IPR024077">
    <property type="entry name" value="Neurolysin/TOP_dom2"/>
</dbReference>
<dbReference type="InterPro" id="IPR045090">
    <property type="entry name" value="Pept_M3A_M3B"/>
</dbReference>
<dbReference type="InterPro" id="IPR001567">
    <property type="entry name" value="Pept_M3A_M3B_dom"/>
</dbReference>
<dbReference type="PANTHER" id="PTHR11804:SF79">
    <property type="entry name" value="MITOCHONDRIAL INTERMEDIATE PEPTIDASE"/>
    <property type="match status" value="1"/>
</dbReference>
<dbReference type="PANTHER" id="PTHR11804">
    <property type="entry name" value="PROTEASE M3 THIMET OLIGOPEPTIDASE-RELATED"/>
    <property type="match status" value="1"/>
</dbReference>
<dbReference type="Pfam" id="PF01432">
    <property type="entry name" value="Peptidase_M3"/>
    <property type="match status" value="1"/>
</dbReference>
<dbReference type="SUPFAM" id="SSF55486">
    <property type="entry name" value="Metalloproteases ('zincins'), catalytic domain"/>
    <property type="match status" value="1"/>
</dbReference>
<dbReference type="PROSITE" id="PS00142">
    <property type="entry name" value="ZINC_PROTEASE"/>
    <property type="match status" value="1"/>
</dbReference>
<proteinExistence type="inferred from homology"/>